<proteinExistence type="inferred from homology"/>
<evidence type="ECO:0000255" key="1">
    <source>
        <dbReference type="HAMAP-Rule" id="MF_01518"/>
    </source>
</evidence>
<protein>
    <recommendedName>
        <fullName evidence="1">Adenine deaminase</fullName>
        <shortName evidence="1">Adenase</shortName>
        <shortName evidence="1">Adenine aminase</shortName>
        <ecNumber evidence="1">3.5.4.2</ecNumber>
    </recommendedName>
</protein>
<dbReference type="EC" id="3.5.4.2" evidence="1"/>
<dbReference type="EMBL" id="CP000243">
    <property type="protein sequence ID" value="ABE09648.1"/>
    <property type="molecule type" value="Genomic_DNA"/>
</dbReference>
<dbReference type="SMR" id="Q1R4R6"/>
<dbReference type="KEGG" id="eci:UTI89_C4221"/>
<dbReference type="HOGENOM" id="CLU_027935_0_0_6"/>
<dbReference type="Proteomes" id="UP000001952">
    <property type="component" value="Chromosome"/>
</dbReference>
<dbReference type="GO" id="GO:0000034">
    <property type="term" value="F:adenine deaminase activity"/>
    <property type="evidence" value="ECO:0007669"/>
    <property type="project" value="UniProtKB-UniRule"/>
</dbReference>
<dbReference type="GO" id="GO:0006146">
    <property type="term" value="P:adenine catabolic process"/>
    <property type="evidence" value="ECO:0007669"/>
    <property type="project" value="InterPro"/>
</dbReference>
<dbReference type="CDD" id="cd01295">
    <property type="entry name" value="AdeC"/>
    <property type="match status" value="1"/>
</dbReference>
<dbReference type="FunFam" id="3.20.20.140:FF:000016">
    <property type="entry name" value="Adenine deaminase"/>
    <property type="match status" value="1"/>
</dbReference>
<dbReference type="Gene3D" id="3.20.20.140">
    <property type="entry name" value="Metal-dependent hydrolases"/>
    <property type="match status" value="1"/>
</dbReference>
<dbReference type="Gene3D" id="2.30.40.10">
    <property type="entry name" value="Urease, subunit C, domain 1"/>
    <property type="match status" value="1"/>
</dbReference>
<dbReference type="HAMAP" id="MF_01518">
    <property type="entry name" value="Adenine_deamin"/>
    <property type="match status" value="1"/>
</dbReference>
<dbReference type="InterPro" id="IPR006679">
    <property type="entry name" value="Adenine_deam"/>
</dbReference>
<dbReference type="InterPro" id="IPR026912">
    <property type="entry name" value="Adenine_deam_C"/>
</dbReference>
<dbReference type="InterPro" id="IPR006680">
    <property type="entry name" value="Amidohydro-rel"/>
</dbReference>
<dbReference type="InterPro" id="IPR011059">
    <property type="entry name" value="Metal-dep_hydrolase_composite"/>
</dbReference>
<dbReference type="InterPro" id="IPR032466">
    <property type="entry name" value="Metal_Hydrolase"/>
</dbReference>
<dbReference type="NCBIfam" id="TIGR01178">
    <property type="entry name" value="ade"/>
    <property type="match status" value="1"/>
</dbReference>
<dbReference type="NCBIfam" id="NF007457">
    <property type="entry name" value="PRK10027.1"/>
    <property type="match status" value="1"/>
</dbReference>
<dbReference type="PANTHER" id="PTHR11113:SF2">
    <property type="entry name" value="ADENINE DEAMINASE"/>
    <property type="match status" value="1"/>
</dbReference>
<dbReference type="PANTHER" id="PTHR11113">
    <property type="entry name" value="N-ACETYLGLUCOSAMINE-6-PHOSPHATE DEACETYLASE"/>
    <property type="match status" value="1"/>
</dbReference>
<dbReference type="Pfam" id="PF13382">
    <property type="entry name" value="Adenine_deam_C"/>
    <property type="match status" value="1"/>
</dbReference>
<dbReference type="Pfam" id="PF01979">
    <property type="entry name" value="Amidohydro_1"/>
    <property type="match status" value="1"/>
</dbReference>
<dbReference type="SUPFAM" id="SSF51338">
    <property type="entry name" value="Composite domain of metallo-dependent hydrolases"/>
    <property type="match status" value="1"/>
</dbReference>
<dbReference type="SUPFAM" id="SSF51556">
    <property type="entry name" value="Metallo-dependent hydrolases"/>
    <property type="match status" value="1"/>
</dbReference>
<keyword id="KW-0378">Hydrolase</keyword>
<keyword id="KW-0464">Manganese</keyword>
<gene>
    <name evidence="1" type="primary">ade</name>
    <name type="ordered locus">UTI89_C4221</name>
</gene>
<reference key="1">
    <citation type="journal article" date="2006" name="Proc. Natl. Acad. Sci. U.S.A.">
        <title>Identification of genes subject to positive selection in uropathogenic strains of Escherichia coli: a comparative genomics approach.</title>
        <authorList>
            <person name="Chen S.L."/>
            <person name="Hung C.-S."/>
            <person name="Xu J."/>
            <person name="Reigstad C.S."/>
            <person name="Magrini V."/>
            <person name="Sabo A."/>
            <person name="Blasiar D."/>
            <person name="Bieri T."/>
            <person name="Meyer R.R."/>
            <person name="Ozersky P."/>
            <person name="Armstrong J.R."/>
            <person name="Fulton R.S."/>
            <person name="Latreille J.P."/>
            <person name="Spieth J."/>
            <person name="Hooton T.M."/>
            <person name="Mardis E.R."/>
            <person name="Hultgren S.J."/>
            <person name="Gordon J.I."/>
        </authorList>
    </citation>
    <scope>NUCLEOTIDE SEQUENCE [LARGE SCALE GENOMIC DNA]</scope>
    <source>
        <strain>UTI89 / UPEC</strain>
    </source>
</reference>
<name>ADEC_ECOUT</name>
<feature type="chain" id="PRO_0000296723" description="Adenine deaminase">
    <location>
        <begin position="1"/>
        <end position="588"/>
    </location>
</feature>
<sequence>MNNSINHKFHHISRTEYQELLAVSRGDAVADYIIDNVSILDLINGGEISGPIVIKGRYIAGVGAEYADAPALQRIDARGATAVPGFIDAHLHIESSMMTPVTFETATLPRGLTTVICDPHEIVNVMGEAGFAWFARCAEQARQNQYLQVSSCVPALEGCDVNGASFTLEQMLAWRDHPQVTGLAEMMDYPGVISGQNALLDKLDAFRHLTLDGHCPGLGGKELNAYIAAGIENCHESYQLEEGRRKLQLGMSLMIREGSAARNLNALAPLINEFNSPQCMLCTDDRNPWEIAHEGHIDALIRRLIEQHNVPLHVAYRVASWSTARHFGLNHLGLLAPGKQADIVLLSDARKVTVQQVLVKGEPIDAQTLQAEESARLAQSAPPYGNTIDRQPVSASDFALQFTPGKRYRVIEVIHNELITHSRSSVYSENGFDRDDVCFIAVLERYGQRLAPACGLLGGFGLNEGALAATVSHDSHNIVVIGRSAEEMALAVNQVIQDGGGLCVVRNGQVQSHLPLPIAGLMSTDTAQSLAEQIDALKAAARECGPLPDEPFIQMAFLSLPVIPALKLTSQGLFDGEKFAFTTLEFTE</sequence>
<comment type="catalytic activity">
    <reaction evidence="1">
        <text>adenine + H2O + H(+) = hypoxanthine + NH4(+)</text>
        <dbReference type="Rhea" id="RHEA:23688"/>
        <dbReference type="ChEBI" id="CHEBI:15377"/>
        <dbReference type="ChEBI" id="CHEBI:15378"/>
        <dbReference type="ChEBI" id="CHEBI:16708"/>
        <dbReference type="ChEBI" id="CHEBI:17368"/>
        <dbReference type="ChEBI" id="CHEBI:28938"/>
        <dbReference type="EC" id="3.5.4.2"/>
    </reaction>
</comment>
<comment type="cofactor">
    <cofactor evidence="1">
        <name>Mn(2+)</name>
        <dbReference type="ChEBI" id="CHEBI:29035"/>
    </cofactor>
</comment>
<comment type="subunit">
    <text evidence="1">Homodimer.</text>
</comment>
<comment type="similarity">
    <text evidence="1">Belongs to the metallo-dependent hydrolases superfamily. Adenine deaminase family.</text>
</comment>
<organism>
    <name type="scientific">Escherichia coli (strain UTI89 / UPEC)</name>
    <dbReference type="NCBI Taxonomy" id="364106"/>
    <lineage>
        <taxon>Bacteria</taxon>
        <taxon>Pseudomonadati</taxon>
        <taxon>Pseudomonadota</taxon>
        <taxon>Gammaproteobacteria</taxon>
        <taxon>Enterobacterales</taxon>
        <taxon>Enterobacteriaceae</taxon>
        <taxon>Escherichia</taxon>
    </lineage>
</organism>
<accession>Q1R4R6</accession>